<comment type="function">
    <text evidence="3 4 6 7 9 10 11">Required for resumption of chromosome replication after DNA damage, specifically in S phase (PubMed:10473635, PubMed:15972456, PubMed:28784724). Is recruited to chromatin in response to stalled replication forks and acts as a scaffold during DNA repair (PubMed:20661445, PubMed:30348841). Required for the accumulation of the Smc5-Smc6 genome stability complex in foci during replication stress and for activation of the intrinsic SUMO ligase activity of the complex by collapsed replication forks (PubMed:30348841). In pericentromeric heterochromatin, enhances Clr4/Suv39-mediated H3 Lys-9 dimethylation (H3K9me2), required for stabilization of stalled replication forks and accurate chromosome segregation during mitosis (PubMed:23358415, PubMed:23656778).</text>
</comment>
<comment type="function">
    <text evidence="3">Required for mitotic fidelity, specifically in the G2 phase of the cell cycle. Plays a role in chromatin organization.</text>
</comment>
<comment type="subunit">
    <text evidence="5 6 10 11">Interacts with gammaH2A; binds phosphohistone H2A (gammaH2A) formed by Rad3/ATR checkpoint kinase at DNA lesions (PubMed:20094029, PubMed:20661445). Interacts with Rhp18/Rad18 (PubMed:28784724). Interacts with Nse5-Nse6; this allows to tether Smc5-Smc6 at replicative DNA lesions (PubMed:30348841).</text>
</comment>
<comment type="interaction">
    <interactant intactId="EBI-7764855">
        <id>Q10337</id>
    </interactant>
    <interactant intactId="EBI-7764873">
        <id>P04909</id>
        <label>hta1</label>
    </interactant>
    <organismsDiffer>false</organismsDiffer>
    <experiments>4</experiments>
</comment>
<comment type="subcellular location">
    <subcellularLocation>
        <location evidence="8">Nucleus</location>
    </subcellularLocation>
    <subcellularLocation>
        <location evidence="6 7">Chromosome</location>
    </subcellularLocation>
    <text evidence="6 7 8">Localizes to DNA double-strand breaks (PubMed:20661445, PubMed:23628481). Localizes to pericentromeric heterochromatin during S phase (PubMed:23358415).</text>
</comment>
<comment type="domain">
    <text evidence="5">Forms foci at DNA lesions through its gamma-H2A-binding C-terminal BRCT domain.</text>
</comment>
<gene>
    <name type="primary">brc1</name>
    <name evidence="12" type="ORF">SPBC582.05c</name>
</gene>
<accession>Q10337</accession>
<accession>A0AAN2L3Z3</accession>
<organism>
    <name type="scientific">Schizosaccharomyces pombe (strain 972 / ATCC 24843)</name>
    <name type="common">Fission yeast</name>
    <dbReference type="NCBI Taxonomy" id="284812"/>
    <lineage>
        <taxon>Eukaryota</taxon>
        <taxon>Fungi</taxon>
        <taxon>Dikarya</taxon>
        <taxon>Ascomycota</taxon>
        <taxon>Taphrinomycotina</taxon>
        <taxon>Schizosaccharomycetes</taxon>
        <taxon>Schizosaccharomycetales</taxon>
        <taxon>Schizosaccharomycetaceae</taxon>
        <taxon>Schizosaccharomyces</taxon>
    </lineage>
</organism>
<feature type="chain" id="PRO_0000064983" description="BRCT-containing protein 1">
    <location>
        <begin position="1"/>
        <end position="849"/>
    </location>
</feature>
<feature type="domain" description="BRCT 1" evidence="1">
    <location>
        <begin position="1"/>
        <end position="75"/>
    </location>
</feature>
<feature type="domain" description="BRCT 2" evidence="1">
    <location>
        <begin position="76"/>
        <end position="167"/>
    </location>
</feature>
<feature type="domain" description="BRCT 3" evidence="1">
    <location>
        <begin position="282"/>
        <end position="370"/>
    </location>
</feature>
<feature type="domain" description="BRCT 4" evidence="1">
    <location>
        <begin position="625"/>
        <end position="715"/>
    </location>
</feature>
<feature type="domain" description="BRCT 5" evidence="1">
    <location>
        <begin position="738"/>
        <end position="843"/>
    </location>
</feature>
<feature type="region of interest" description="Disordered" evidence="2">
    <location>
        <begin position="453"/>
        <end position="519"/>
    </location>
</feature>
<feature type="region of interest" description="Disordered" evidence="2">
    <location>
        <begin position="606"/>
        <end position="632"/>
    </location>
</feature>
<feature type="compositionally biased region" description="Basic and acidic residues" evidence="2">
    <location>
        <begin position="480"/>
        <end position="493"/>
    </location>
</feature>
<feature type="strand" evidence="15">
    <location>
        <begin position="638"/>
        <end position="642"/>
    </location>
</feature>
<feature type="helix" evidence="15">
    <location>
        <begin position="652"/>
        <end position="657"/>
    </location>
</feature>
<feature type="strand" evidence="15">
    <location>
        <begin position="659"/>
        <end position="661"/>
    </location>
</feature>
<feature type="turn" evidence="15">
    <location>
        <begin position="665"/>
        <end position="667"/>
    </location>
</feature>
<feature type="strand" evidence="15">
    <location>
        <begin position="669"/>
        <end position="672"/>
    </location>
</feature>
<feature type="helix" evidence="15">
    <location>
        <begin position="680"/>
        <end position="685"/>
    </location>
</feature>
<feature type="helix" evidence="15">
    <location>
        <begin position="686"/>
        <end position="688"/>
    </location>
</feature>
<feature type="strand" evidence="15">
    <location>
        <begin position="691"/>
        <end position="693"/>
    </location>
</feature>
<feature type="helix" evidence="15">
    <location>
        <begin position="695"/>
        <end position="704"/>
    </location>
</feature>
<feature type="helix" evidence="15">
    <location>
        <begin position="711"/>
        <end position="713"/>
    </location>
</feature>
<feature type="helix" evidence="15">
    <location>
        <begin position="718"/>
        <end position="724"/>
    </location>
</feature>
<feature type="helix" evidence="15">
    <location>
        <begin position="728"/>
        <end position="738"/>
    </location>
</feature>
<feature type="turn" evidence="15">
    <location>
        <begin position="742"/>
        <end position="745"/>
    </location>
</feature>
<feature type="strand" evidence="15">
    <location>
        <begin position="746"/>
        <end position="751"/>
    </location>
</feature>
<feature type="helix" evidence="15">
    <location>
        <begin position="757"/>
        <end position="759"/>
    </location>
</feature>
<feature type="helix" evidence="15">
    <location>
        <begin position="760"/>
        <end position="769"/>
    </location>
</feature>
<feature type="strand" evidence="15">
    <location>
        <begin position="774"/>
        <end position="777"/>
    </location>
</feature>
<feature type="helix" evidence="15">
    <location>
        <begin position="782"/>
        <end position="790"/>
    </location>
</feature>
<feature type="strand" evidence="15">
    <location>
        <begin position="793"/>
        <end position="797"/>
    </location>
</feature>
<feature type="helix" evidence="15">
    <location>
        <begin position="799"/>
        <end position="801"/>
    </location>
</feature>
<feature type="helix" evidence="15">
    <location>
        <begin position="802"/>
        <end position="805"/>
    </location>
</feature>
<feature type="turn" evidence="15">
    <location>
        <begin position="806"/>
        <end position="808"/>
    </location>
</feature>
<feature type="helix" evidence="15">
    <location>
        <begin position="809"/>
        <end position="812"/>
    </location>
</feature>
<feature type="strand" evidence="15">
    <location>
        <begin position="818"/>
        <end position="822"/>
    </location>
</feature>
<feature type="helix" evidence="15">
    <location>
        <begin position="823"/>
        <end position="832"/>
    </location>
</feature>
<feature type="helix" evidence="15">
    <location>
        <begin position="843"/>
        <end position="845"/>
    </location>
</feature>
<protein>
    <recommendedName>
        <fullName>BRCT-containing protein 1</fullName>
    </recommendedName>
</protein>
<evidence type="ECO:0000255" key="1">
    <source>
        <dbReference type="PROSITE-ProRule" id="PRU00033"/>
    </source>
</evidence>
<evidence type="ECO:0000256" key="2">
    <source>
        <dbReference type="SAM" id="MobiDB-lite"/>
    </source>
</evidence>
<evidence type="ECO:0000269" key="3">
    <source>
    </source>
</evidence>
<evidence type="ECO:0000269" key="4">
    <source>
    </source>
</evidence>
<evidence type="ECO:0000269" key="5">
    <source>
    </source>
</evidence>
<evidence type="ECO:0000269" key="6">
    <source>
    </source>
</evidence>
<evidence type="ECO:0000269" key="7">
    <source>
    </source>
</evidence>
<evidence type="ECO:0000269" key="8">
    <source>
    </source>
</evidence>
<evidence type="ECO:0000269" key="9">
    <source>
    </source>
</evidence>
<evidence type="ECO:0000269" key="10">
    <source>
    </source>
</evidence>
<evidence type="ECO:0000269" key="11">
    <source>
    </source>
</evidence>
<evidence type="ECO:0000312" key="12">
    <source>
        <dbReference type="PomBase" id="SPBC582.05c"/>
    </source>
</evidence>
<evidence type="ECO:0007744" key="13">
    <source>
        <dbReference type="PDB" id="3L40"/>
    </source>
</evidence>
<evidence type="ECO:0007744" key="14">
    <source>
        <dbReference type="PDB" id="3L41"/>
    </source>
</evidence>
<evidence type="ECO:0007829" key="15">
    <source>
        <dbReference type="PDB" id="3L41"/>
    </source>
</evidence>
<dbReference type="EMBL" id="CU329671">
    <property type="protein sequence ID" value="CAK9839472.1"/>
    <property type="molecule type" value="Genomic_DNA"/>
</dbReference>
<dbReference type="PIR" id="T37978">
    <property type="entry name" value="T37978"/>
</dbReference>
<dbReference type="PDB" id="3L40">
    <property type="method" value="X-ray"/>
    <property type="resolution" value="1.55 A"/>
    <property type="chains" value="A/B=630-848"/>
</dbReference>
<dbReference type="PDB" id="3L41">
    <property type="method" value="X-ray"/>
    <property type="resolution" value="1.45 A"/>
    <property type="chains" value="A=630-849"/>
</dbReference>
<dbReference type="PDBsum" id="3L40"/>
<dbReference type="PDBsum" id="3L41"/>
<dbReference type="SMR" id="Q10337"/>
<dbReference type="BioGRID" id="277586">
    <property type="interactions" value="67"/>
</dbReference>
<dbReference type="FunCoup" id="Q10337">
    <property type="interactions" value="347"/>
</dbReference>
<dbReference type="IntAct" id="Q10337">
    <property type="interactions" value="1"/>
</dbReference>
<dbReference type="MINT" id="Q10337"/>
<dbReference type="STRING" id="284812.Q10337"/>
<dbReference type="iPTMnet" id="Q10337"/>
<dbReference type="PaxDb" id="4896-SPBC582.05c.1"/>
<dbReference type="EnsemblFungi" id="SPBC582.05c.1">
    <property type="protein sequence ID" value="SPBC582.05c.1:pep"/>
    <property type="gene ID" value="SPBC582.05c"/>
</dbReference>
<dbReference type="PomBase" id="SPBC582.05c">
    <property type="gene designation" value="brc1"/>
</dbReference>
<dbReference type="VEuPathDB" id="FungiDB:SPBC582.05c"/>
<dbReference type="eggNOG" id="KOG2043">
    <property type="taxonomic scope" value="Eukaryota"/>
</dbReference>
<dbReference type="HOGENOM" id="CLU_328771_0_0_1"/>
<dbReference type="InParanoid" id="Q10337"/>
<dbReference type="OMA" id="SWLYHLI"/>
<dbReference type="PhylomeDB" id="Q10337"/>
<dbReference type="EvolutionaryTrace" id="Q10337"/>
<dbReference type="PRO" id="PR:Q10337"/>
<dbReference type="Proteomes" id="UP000002485">
    <property type="component" value="Chromosome II"/>
</dbReference>
<dbReference type="GO" id="GO:0000775">
    <property type="term" value="C:chromosome, centromeric region"/>
    <property type="evidence" value="ECO:0000314"/>
    <property type="project" value="PomBase"/>
</dbReference>
<dbReference type="GO" id="GO:0099115">
    <property type="term" value="C:chromosome, subtelomeric region"/>
    <property type="evidence" value="ECO:0000314"/>
    <property type="project" value="PomBase"/>
</dbReference>
<dbReference type="GO" id="GO:0035361">
    <property type="term" value="C:Cul8-RING ubiquitin ligase complex"/>
    <property type="evidence" value="ECO:0000318"/>
    <property type="project" value="GO_Central"/>
</dbReference>
<dbReference type="GO" id="GO:0005730">
    <property type="term" value="C:nucleolus"/>
    <property type="evidence" value="ECO:0000314"/>
    <property type="project" value="PomBase"/>
</dbReference>
<dbReference type="GO" id="GO:0005634">
    <property type="term" value="C:nucleus"/>
    <property type="evidence" value="ECO:0000314"/>
    <property type="project" value="PomBase"/>
</dbReference>
<dbReference type="GO" id="GO:0033553">
    <property type="term" value="C:rDNA heterochromatin"/>
    <property type="evidence" value="ECO:0000314"/>
    <property type="project" value="PomBase"/>
</dbReference>
<dbReference type="GO" id="GO:0035861">
    <property type="term" value="C:site of double-strand break"/>
    <property type="evidence" value="ECO:0000314"/>
    <property type="project" value="PomBase"/>
</dbReference>
<dbReference type="GO" id="GO:0140463">
    <property type="term" value="F:chromatin-protein adaptor activity"/>
    <property type="evidence" value="ECO:0000269"/>
    <property type="project" value="PomBase"/>
</dbReference>
<dbReference type="GO" id="GO:1990683">
    <property type="term" value="P:DNA double-strand break attachment to nuclear envelope"/>
    <property type="evidence" value="ECO:0000318"/>
    <property type="project" value="GO_Central"/>
</dbReference>
<dbReference type="GO" id="GO:0006281">
    <property type="term" value="P:DNA repair"/>
    <property type="evidence" value="ECO:0000315"/>
    <property type="project" value="PomBase"/>
</dbReference>
<dbReference type="GO" id="GO:0006302">
    <property type="term" value="P:double-strand break repair"/>
    <property type="evidence" value="ECO:0000269"/>
    <property type="project" value="PomBase"/>
</dbReference>
<dbReference type="CDD" id="cd18436">
    <property type="entry name" value="BRCT_BRC1_like_rpt2"/>
    <property type="match status" value="1"/>
</dbReference>
<dbReference type="CDD" id="cd18437">
    <property type="entry name" value="BRCT_BRC1_like_rpt3"/>
    <property type="match status" value="1"/>
</dbReference>
<dbReference type="CDD" id="cd18438">
    <property type="entry name" value="BRCT_BRC1_like_rpt4"/>
    <property type="match status" value="1"/>
</dbReference>
<dbReference type="CDD" id="cd17743">
    <property type="entry name" value="BRCT_BRC1_like_rpt5"/>
    <property type="match status" value="1"/>
</dbReference>
<dbReference type="CDD" id="cd18439">
    <property type="entry name" value="BRCT_BRC1_like_rpt6"/>
    <property type="match status" value="1"/>
</dbReference>
<dbReference type="FunFam" id="3.40.50.10190:FF:000046">
    <property type="entry name" value="PAX interacting protein 1"/>
    <property type="match status" value="1"/>
</dbReference>
<dbReference type="Gene3D" id="3.40.50.10190">
    <property type="entry name" value="BRCT domain"/>
    <property type="match status" value="5"/>
</dbReference>
<dbReference type="InterPro" id="IPR001357">
    <property type="entry name" value="BRCT_dom"/>
</dbReference>
<dbReference type="InterPro" id="IPR036420">
    <property type="entry name" value="BRCT_dom_sf"/>
</dbReference>
<dbReference type="InterPro" id="IPR053036">
    <property type="entry name" value="CellCycle_DNARepair_Reg"/>
</dbReference>
<dbReference type="PANTHER" id="PTHR47667">
    <property type="entry name" value="REGULATOR OF TY1 TRANSPOSITION PROTEIN 107"/>
    <property type="match status" value="1"/>
</dbReference>
<dbReference type="PANTHER" id="PTHR47667:SF1">
    <property type="entry name" value="REGULATOR OF TY1 TRANSPOSITION PROTEIN 107"/>
    <property type="match status" value="1"/>
</dbReference>
<dbReference type="Pfam" id="PF00533">
    <property type="entry name" value="BRCT"/>
    <property type="match status" value="2"/>
</dbReference>
<dbReference type="Pfam" id="PF16589">
    <property type="entry name" value="BRCT_2"/>
    <property type="match status" value="1"/>
</dbReference>
<dbReference type="Pfam" id="PF12738">
    <property type="entry name" value="PTCB-BRCT"/>
    <property type="match status" value="1"/>
</dbReference>
<dbReference type="Pfam" id="PF16770">
    <property type="entry name" value="RTT107_BRCT_5"/>
    <property type="match status" value="1"/>
</dbReference>
<dbReference type="SMART" id="SM00292">
    <property type="entry name" value="BRCT"/>
    <property type="match status" value="5"/>
</dbReference>
<dbReference type="SUPFAM" id="SSF52113">
    <property type="entry name" value="BRCT domain"/>
    <property type="match status" value="4"/>
</dbReference>
<dbReference type="PROSITE" id="PS50172">
    <property type="entry name" value="BRCT"/>
    <property type="match status" value="5"/>
</dbReference>
<name>BRC1_SCHPO</name>
<reference key="1">
    <citation type="journal article" date="2002" name="Nature">
        <title>The genome sequence of Schizosaccharomyces pombe.</title>
        <authorList>
            <person name="Wood V."/>
            <person name="Gwilliam R."/>
            <person name="Rajandream M.A."/>
            <person name="Lyne M.H."/>
            <person name="Lyne R."/>
            <person name="Stewart A."/>
            <person name="Sgouros J.G."/>
            <person name="Peat N."/>
            <person name="Hayles J."/>
            <person name="Baker S.G."/>
            <person name="Basham D."/>
            <person name="Bowman S."/>
            <person name="Brooks K."/>
            <person name="Brown D."/>
            <person name="Brown S."/>
            <person name="Chillingworth T."/>
            <person name="Churcher C.M."/>
            <person name="Collins M."/>
            <person name="Connor R."/>
            <person name="Cronin A."/>
            <person name="Davis P."/>
            <person name="Feltwell T."/>
            <person name="Fraser A."/>
            <person name="Gentles S."/>
            <person name="Goble A."/>
            <person name="Hamlin N."/>
            <person name="Harris D.E."/>
            <person name="Hidalgo J."/>
            <person name="Hodgson G."/>
            <person name="Holroyd S."/>
            <person name="Hornsby T."/>
            <person name="Howarth S."/>
            <person name="Huckle E.J."/>
            <person name="Hunt S."/>
            <person name="Jagels K."/>
            <person name="James K.D."/>
            <person name="Jones L."/>
            <person name="Jones M."/>
            <person name="Leather S."/>
            <person name="McDonald S."/>
            <person name="McLean J."/>
            <person name="Mooney P."/>
            <person name="Moule S."/>
            <person name="Mungall K.L."/>
            <person name="Murphy L.D."/>
            <person name="Niblett D."/>
            <person name="Odell C."/>
            <person name="Oliver K."/>
            <person name="O'Neil S."/>
            <person name="Pearson D."/>
            <person name="Quail M.A."/>
            <person name="Rabbinowitsch E."/>
            <person name="Rutherford K.M."/>
            <person name="Rutter S."/>
            <person name="Saunders D."/>
            <person name="Seeger K."/>
            <person name="Sharp S."/>
            <person name="Skelton J."/>
            <person name="Simmonds M.N."/>
            <person name="Squares R."/>
            <person name="Squares S."/>
            <person name="Stevens K."/>
            <person name="Taylor K."/>
            <person name="Taylor R.G."/>
            <person name="Tivey A."/>
            <person name="Walsh S.V."/>
            <person name="Warren T."/>
            <person name="Whitehead S."/>
            <person name="Woodward J.R."/>
            <person name="Volckaert G."/>
            <person name="Aert R."/>
            <person name="Robben J."/>
            <person name="Grymonprez B."/>
            <person name="Weltjens I."/>
            <person name="Vanstreels E."/>
            <person name="Rieger M."/>
            <person name="Schaefer M."/>
            <person name="Mueller-Auer S."/>
            <person name="Gabel C."/>
            <person name="Fuchs M."/>
            <person name="Duesterhoeft A."/>
            <person name="Fritzc C."/>
            <person name="Holzer E."/>
            <person name="Moestl D."/>
            <person name="Hilbert H."/>
            <person name="Borzym K."/>
            <person name="Langer I."/>
            <person name="Beck A."/>
            <person name="Lehrach H."/>
            <person name="Reinhardt R."/>
            <person name="Pohl T.M."/>
            <person name="Eger P."/>
            <person name="Zimmermann W."/>
            <person name="Wedler H."/>
            <person name="Wambutt R."/>
            <person name="Purnelle B."/>
            <person name="Goffeau A."/>
            <person name="Cadieu E."/>
            <person name="Dreano S."/>
            <person name="Gloux S."/>
            <person name="Lelaure V."/>
            <person name="Mottier S."/>
            <person name="Galibert F."/>
            <person name="Aves S.J."/>
            <person name="Xiang Z."/>
            <person name="Hunt C."/>
            <person name="Moore K."/>
            <person name="Hurst S.M."/>
            <person name="Lucas M."/>
            <person name="Rochet M."/>
            <person name="Gaillardin C."/>
            <person name="Tallada V.A."/>
            <person name="Garzon A."/>
            <person name="Thode G."/>
            <person name="Daga R.R."/>
            <person name="Cruzado L."/>
            <person name="Jimenez J."/>
            <person name="Sanchez M."/>
            <person name="del Rey F."/>
            <person name="Benito J."/>
            <person name="Dominguez A."/>
            <person name="Revuelta J.L."/>
            <person name="Moreno S."/>
            <person name="Armstrong J."/>
            <person name="Forsburg S.L."/>
            <person name="Cerutti L."/>
            <person name="Lowe T."/>
            <person name="McCombie W.R."/>
            <person name="Paulsen I."/>
            <person name="Potashkin J."/>
            <person name="Shpakovski G.V."/>
            <person name="Ussery D."/>
            <person name="Barrell B.G."/>
            <person name="Nurse P."/>
        </authorList>
    </citation>
    <scope>NUCLEOTIDE SEQUENCE [LARGE SCALE GENOMIC DNA]</scope>
    <source>
        <strain>972 / ATCC 24843</strain>
    </source>
</reference>
<reference key="2">
    <citation type="journal article" date="1999" name="Mol. Biol. Cell">
        <title>Rad18 is required for DNA repair and checkpoint responses in fission yeast.</title>
        <authorList>
            <person name="Verkade H.M."/>
            <person name="Bugg S.J."/>
            <person name="Lindsay H.D."/>
            <person name="Carr A.M."/>
            <person name="O'Connell M.J."/>
        </authorList>
    </citation>
    <scope>FUNCTION</scope>
</reference>
<reference key="3">
    <citation type="journal article" date="2005" name="Genetics">
        <title>Brc1-mediated DNA repair and damage tolerance.</title>
        <authorList>
            <person name="Sheedy D.M."/>
            <person name="Dimitrova D."/>
            <person name="Rankin J.K."/>
            <person name="Bass K.L."/>
            <person name="Lee K.M."/>
            <person name="Tapia-Alveal C."/>
            <person name="Harvey S.H."/>
            <person name="Murray J.M."/>
            <person name="O'Connell M.J."/>
        </authorList>
    </citation>
    <scope>FUNCTION</scope>
</reference>
<reference key="4">
    <citation type="journal article" date="2010" name="PLoS Genet.">
        <title>Rad3 decorates critical chromosomal domains with gammaH2A to protect genome integrity during S-Phase in fission yeast.</title>
        <authorList>
            <person name="Rozenzhak S."/>
            <person name="Mejia-Ramirez E."/>
            <person name="Williams J.S."/>
            <person name="Schaffer L."/>
            <person name="Hammond J.A."/>
            <person name="Head S.R."/>
            <person name="Russell P."/>
        </authorList>
    </citation>
    <scope>FUNCTION</scope>
    <scope>SUBCELLULAR LOCATION</scope>
    <scope>SUBUNIT</scope>
</reference>
<reference key="5">
    <citation type="journal article" date="2013" name="Cell Cycle">
        <title>Brc1 links replication stress response and centromere function.</title>
        <authorList>
            <person name="Lee S.Y."/>
            <person name="Russell P."/>
        </authorList>
    </citation>
    <scope>FUNCTION</scope>
</reference>
<reference key="6">
    <citation type="journal article" date="2013" name="DNA Repair">
        <title>A proteome-wide visual screen identifies fission yeast proteins localizing to DNA double-strand breaks.</title>
        <authorList>
            <person name="Yu Y."/>
            <person name="Ren J.Y."/>
            <person name="Zhang J.M."/>
            <person name="Suo F."/>
            <person name="Fang X.F."/>
            <person name="Wu F."/>
            <person name="Du L.L."/>
        </authorList>
    </citation>
    <scope>SUBCELLULAR LOCATION</scope>
</reference>
<reference key="7">
    <citation type="journal article" date="2013" name="Mol. Cell. Biol.">
        <title>gammaH2A-binding protein Brc1 affects centromere function in fission yeast.</title>
        <authorList>
            <person name="Lee S.Y."/>
            <person name="Rozenzhak S."/>
            <person name="Russell P."/>
        </authorList>
    </citation>
    <scope>FUNCTION</scope>
    <scope>SUBCELLULAR LOCATION</scope>
</reference>
<reference key="8">
    <citation type="journal article" date="2017" name="Mol. Cell. Biol.">
        <title>Multi-BRCT domain protein Brc1 links Rhp18/Rad18 and gammaH2A to maintain genome stability during S phase.</title>
        <authorList>
            <person name="Reubens M.C."/>
            <person name="Rozenzhak S."/>
            <person name="Russell P."/>
        </authorList>
    </citation>
    <scope>FUNCTION</scope>
    <scope>INTERACTION WITH RAD18</scope>
</reference>
<reference key="9">
    <citation type="journal article" date="2019" name="Mol. Cell. Biol.">
        <title>Brc1 promotes the focal accumulation and SUMO ligase activity of Smc5-Smc6 during replication stress.</title>
        <authorList>
            <person name="Oravcova M."/>
            <person name="Gadaleta M.C."/>
            <person name="Nie M."/>
            <person name="Reubens M.C."/>
            <person name="Limbo O."/>
            <person name="Russell P."/>
            <person name="Boddy M.N."/>
        </authorList>
    </citation>
    <scope>FUNCTION</scope>
    <scope>SUBUNIT</scope>
</reference>
<reference evidence="13 14" key="10">
    <citation type="journal article" date="2010" name="EMBO J.">
        <title>gammaH2A binds Brc1 to maintain genome integrity during S-phase.</title>
        <authorList>
            <person name="Williams J.S."/>
            <person name="Williams R.S."/>
            <person name="Dovey C.L."/>
            <person name="Guenther G."/>
            <person name="Tainer J.A."/>
            <person name="Russell P."/>
        </authorList>
    </citation>
    <scope>X-RAY CRYSTALLOGRAPHY (1.45 ANGSTROMS) OF 630-849</scope>
    <scope>SUBUNIT</scope>
    <scope>DOMAIN</scope>
</reference>
<sequence>MLAAESSNKELFIKNDGKALSFPYDWKLATHVICDDFSSPNVQEGSKRSLRLAKTNWIRDCVDKNTLLNYSFYSCNPYLLFKGICASSCQIDSYQSSLIDDALETFGGRFSKGLMKSMTHLFTYSGMGAKCKKVLDKPSLSIKLIHPQWLLDCLQFGQLIDQDPYLFPNPSYKKNDSSISKAEPTSLFRNVLHGKRIYFSNDLNLPTNFRHSLQKFSVGIGAKIAESINDCDIFIGLKRDTIEFNLASNKNTTIGTISWLLNLFVLGSWKSPLLNALHYPFPSVGFLKDQMVAVTNYTDAARIYLEKLLLACGATYTKDLKPTNTLLIAASSYGQKYGAAKVWNIPTVHHSWLYSSFKNLSSQAFTDFPVPLDDSYMDFIFPCPLNVEKGSFEDTLKSSLTKGNSEVLLDDLSDPSVSSIKGNKTNEELEKEFKSTSDNFGKHIILTSSFSNQSADKGSSLAAEDDRNDEGSTITGVNRELQDEGRLEIDAKSSKTNTPPSPLLVGTPSKESLKEASSDDELPVLATKLVDNVIKEKSPLSLTPKVVVPSHKETYTDEKKLIDELDRVNPLNSSQLLRSKRKSAATALSMLQNVIMPDVLAFEREKKRRQTHRSVSSGEVSRESSESRNTNAKASKRVYITFTGYDKKPSIDNLKKLDMSITSNPSKCTHLIAPRILRTSKFLCSIPYGPCVVTMDWINSCLKTHEIVDEEPYLLNDPEKELELGCTLESALKRARAQGPSLLEDYVVYLTSKTVAPENVPAVISIVKSNGGVCSTLNVYNKRLARHLEDGNVVLITCNEDSHIWTNFLDNASQNKTIFLQNYDWLIKTVLRQEIDVNDRIADEFARAV</sequence>
<proteinExistence type="evidence at protein level"/>
<keyword id="KW-0002">3D-structure</keyword>
<keyword id="KW-0158">Chromosome</keyword>
<keyword id="KW-0539">Nucleus</keyword>
<keyword id="KW-1185">Reference proteome</keyword>
<keyword id="KW-0677">Repeat</keyword>